<feature type="chain" id="PRO_1000074602" description="Ribosome-recycling factor">
    <location>
        <begin position="1"/>
        <end position="185"/>
    </location>
</feature>
<accession>A8H6L3</accession>
<keyword id="KW-0963">Cytoplasm</keyword>
<keyword id="KW-0648">Protein biosynthesis</keyword>
<keyword id="KW-1185">Reference proteome</keyword>
<comment type="function">
    <text evidence="1">Responsible for the release of ribosomes from messenger RNA at the termination of protein biosynthesis. May increase the efficiency of translation by recycling ribosomes from one round of translation to another.</text>
</comment>
<comment type="subcellular location">
    <subcellularLocation>
        <location evidence="1">Cytoplasm</location>
    </subcellularLocation>
</comment>
<comment type="similarity">
    <text evidence="1">Belongs to the RRF family.</text>
</comment>
<evidence type="ECO:0000255" key="1">
    <source>
        <dbReference type="HAMAP-Rule" id="MF_00040"/>
    </source>
</evidence>
<reference key="1">
    <citation type="submission" date="2007-10" db="EMBL/GenBank/DDBJ databases">
        <title>Complete sequence of Shewanella pealeana ATCC 700345.</title>
        <authorList>
            <consortium name="US DOE Joint Genome Institute"/>
            <person name="Copeland A."/>
            <person name="Lucas S."/>
            <person name="Lapidus A."/>
            <person name="Barry K."/>
            <person name="Glavina del Rio T."/>
            <person name="Dalin E."/>
            <person name="Tice H."/>
            <person name="Pitluck S."/>
            <person name="Chertkov O."/>
            <person name="Brettin T."/>
            <person name="Bruce D."/>
            <person name="Detter J.C."/>
            <person name="Han C."/>
            <person name="Schmutz J."/>
            <person name="Larimer F."/>
            <person name="Land M."/>
            <person name="Hauser L."/>
            <person name="Kyrpides N."/>
            <person name="Kim E."/>
            <person name="Zhao J.-S.Z."/>
            <person name="Manno D."/>
            <person name="Hawari J."/>
            <person name="Richardson P."/>
        </authorList>
    </citation>
    <scope>NUCLEOTIDE SEQUENCE [LARGE SCALE GENOMIC DNA]</scope>
    <source>
        <strain>ATCC 700345 / ANG-SQ1</strain>
    </source>
</reference>
<name>RRF_SHEPA</name>
<dbReference type="EMBL" id="CP000851">
    <property type="protein sequence ID" value="ABV88200.1"/>
    <property type="molecule type" value="Genomic_DNA"/>
</dbReference>
<dbReference type="RefSeq" id="WP_012156105.1">
    <property type="nucleotide sequence ID" value="NC_009901.1"/>
</dbReference>
<dbReference type="SMR" id="A8H6L3"/>
<dbReference type="STRING" id="398579.Spea_2882"/>
<dbReference type="KEGG" id="spl:Spea_2882"/>
<dbReference type="eggNOG" id="COG0233">
    <property type="taxonomic scope" value="Bacteria"/>
</dbReference>
<dbReference type="HOGENOM" id="CLU_073981_2_1_6"/>
<dbReference type="OrthoDB" id="9804006at2"/>
<dbReference type="Proteomes" id="UP000002608">
    <property type="component" value="Chromosome"/>
</dbReference>
<dbReference type="GO" id="GO:0005829">
    <property type="term" value="C:cytosol"/>
    <property type="evidence" value="ECO:0007669"/>
    <property type="project" value="GOC"/>
</dbReference>
<dbReference type="GO" id="GO:0043023">
    <property type="term" value="F:ribosomal large subunit binding"/>
    <property type="evidence" value="ECO:0007669"/>
    <property type="project" value="TreeGrafter"/>
</dbReference>
<dbReference type="GO" id="GO:0002184">
    <property type="term" value="P:cytoplasmic translational termination"/>
    <property type="evidence" value="ECO:0007669"/>
    <property type="project" value="TreeGrafter"/>
</dbReference>
<dbReference type="CDD" id="cd00520">
    <property type="entry name" value="RRF"/>
    <property type="match status" value="1"/>
</dbReference>
<dbReference type="FunFam" id="1.10.132.20:FF:000001">
    <property type="entry name" value="Ribosome-recycling factor"/>
    <property type="match status" value="1"/>
</dbReference>
<dbReference type="FunFam" id="3.30.1360.40:FF:000001">
    <property type="entry name" value="Ribosome-recycling factor"/>
    <property type="match status" value="1"/>
</dbReference>
<dbReference type="Gene3D" id="3.30.1360.40">
    <property type="match status" value="1"/>
</dbReference>
<dbReference type="Gene3D" id="1.10.132.20">
    <property type="entry name" value="Ribosome-recycling factor"/>
    <property type="match status" value="1"/>
</dbReference>
<dbReference type="HAMAP" id="MF_00040">
    <property type="entry name" value="RRF"/>
    <property type="match status" value="1"/>
</dbReference>
<dbReference type="InterPro" id="IPR002661">
    <property type="entry name" value="Ribosome_recyc_fac"/>
</dbReference>
<dbReference type="InterPro" id="IPR023584">
    <property type="entry name" value="Ribosome_recyc_fac_dom"/>
</dbReference>
<dbReference type="InterPro" id="IPR036191">
    <property type="entry name" value="RRF_sf"/>
</dbReference>
<dbReference type="NCBIfam" id="TIGR00496">
    <property type="entry name" value="frr"/>
    <property type="match status" value="1"/>
</dbReference>
<dbReference type="PANTHER" id="PTHR20982:SF3">
    <property type="entry name" value="MITOCHONDRIAL RIBOSOME RECYCLING FACTOR PSEUDO 1"/>
    <property type="match status" value="1"/>
</dbReference>
<dbReference type="PANTHER" id="PTHR20982">
    <property type="entry name" value="RIBOSOME RECYCLING FACTOR"/>
    <property type="match status" value="1"/>
</dbReference>
<dbReference type="Pfam" id="PF01765">
    <property type="entry name" value="RRF"/>
    <property type="match status" value="1"/>
</dbReference>
<dbReference type="SUPFAM" id="SSF55194">
    <property type="entry name" value="Ribosome recycling factor, RRF"/>
    <property type="match status" value="1"/>
</dbReference>
<sequence length="185" mass="20668">MINEIKSDAQTRMDKCVESTKTQMAKVRTGRAHPSLLDTIQVPYYGSLTPLKQVASVSIGDARTLTVSVFDRTMIAAVEKAIMSSDLGLNPMSAGATIRIPLPALTEERRKDLIKVVRAEAENGRIAIRNVRRDANSNVKELEKEKECTEDDVRRSEDDVQKLTDAHIKLIDEILAAKEKELMEF</sequence>
<gene>
    <name evidence="1" type="primary">frr</name>
    <name type="ordered locus">Spea_2882</name>
</gene>
<organism>
    <name type="scientific">Shewanella pealeana (strain ATCC 700345 / ANG-SQ1)</name>
    <dbReference type="NCBI Taxonomy" id="398579"/>
    <lineage>
        <taxon>Bacteria</taxon>
        <taxon>Pseudomonadati</taxon>
        <taxon>Pseudomonadota</taxon>
        <taxon>Gammaproteobacteria</taxon>
        <taxon>Alteromonadales</taxon>
        <taxon>Shewanellaceae</taxon>
        <taxon>Shewanella</taxon>
    </lineage>
</organism>
<proteinExistence type="inferred from homology"/>
<protein>
    <recommendedName>
        <fullName evidence="1">Ribosome-recycling factor</fullName>
        <shortName evidence="1">RRF</shortName>
    </recommendedName>
    <alternativeName>
        <fullName evidence="1">Ribosome-releasing factor</fullName>
    </alternativeName>
</protein>